<evidence type="ECO:0000250" key="1"/>
<evidence type="ECO:0000250" key="2">
    <source>
        <dbReference type="UniProtKB" id="P0A9N4"/>
    </source>
</evidence>
<evidence type="ECO:0000255" key="3">
    <source>
        <dbReference type="PROSITE-ProRule" id="PRU01266"/>
    </source>
</evidence>
<evidence type="ECO:0000305" key="4"/>
<sequence length="251" mass="28555">MLKGHLHSVESMGTVDGPGLRYILFTQGCLLRCLYCHNPDTWKINEPSREVTVDEMVNEILPYKPYFEASGGGVTVSGGEPLLQMPFLEQLFKELKANGVHTCIDTSAGCVNDTPAFNRHFDELQKHTDLILLDIKHIDNDKHIKLTGKPNTHILKFARKLSDMKQPVWIRHVLVPGISDDKEDLIKLGEFINSLDNVEKFEILPYHQLGVHKWKNLGIPYQLENVEPPDDEAVKEAYRYVNFNGKIPVTL</sequence>
<reference key="1">
    <citation type="journal article" date="2003" name="Mol. Microbiol.">
        <title>Genome-based analysis of virulence genes in a non-biofilm-forming Staphylococcus epidermidis strain (ATCC 12228).</title>
        <authorList>
            <person name="Zhang Y.-Q."/>
            <person name="Ren S.-X."/>
            <person name="Li H.-L."/>
            <person name="Wang Y.-X."/>
            <person name="Fu G."/>
            <person name="Yang J."/>
            <person name="Qin Z.-Q."/>
            <person name="Miao Y.-G."/>
            <person name="Wang W.-Y."/>
            <person name="Chen R.-S."/>
            <person name="Shen Y."/>
            <person name="Chen Z."/>
            <person name="Yuan Z.-H."/>
            <person name="Zhao G.-P."/>
            <person name="Qu D."/>
            <person name="Danchin A."/>
            <person name="Wen Y.-M."/>
        </authorList>
    </citation>
    <scope>NUCLEOTIDE SEQUENCE [LARGE SCALE GENOMIC DNA]</scope>
    <source>
        <strain>ATCC 12228 / FDA PCI 1200</strain>
    </source>
</reference>
<comment type="function">
    <text evidence="1">Activation of pyruvate formate-lyase under anaerobic conditions by generation of an organic free radical, using S-adenosylmethionine and reduced flavodoxin as cosubstrates to produce 5'-deoxy-adenosine.</text>
</comment>
<comment type="catalytic activity">
    <reaction>
        <text>glycyl-[formate C-acetyltransferase] + reduced [flavodoxin] + S-adenosyl-L-methionine = glycin-2-yl radical-[formate C-acetyltransferase] + semiquinone [flavodoxin] + 5'-deoxyadenosine + L-methionine + H(+)</text>
        <dbReference type="Rhea" id="RHEA:19225"/>
        <dbReference type="Rhea" id="RHEA-COMP:10622"/>
        <dbReference type="Rhea" id="RHEA-COMP:12190"/>
        <dbReference type="Rhea" id="RHEA-COMP:12191"/>
        <dbReference type="Rhea" id="RHEA-COMP:14480"/>
        <dbReference type="ChEBI" id="CHEBI:15378"/>
        <dbReference type="ChEBI" id="CHEBI:17319"/>
        <dbReference type="ChEBI" id="CHEBI:29947"/>
        <dbReference type="ChEBI" id="CHEBI:32722"/>
        <dbReference type="ChEBI" id="CHEBI:57618"/>
        <dbReference type="ChEBI" id="CHEBI:57844"/>
        <dbReference type="ChEBI" id="CHEBI:59789"/>
        <dbReference type="ChEBI" id="CHEBI:140311"/>
        <dbReference type="EC" id="1.97.1.4"/>
    </reaction>
</comment>
<comment type="cofactor">
    <cofactor evidence="1">
        <name>[4Fe-4S] cluster</name>
        <dbReference type="ChEBI" id="CHEBI:49883"/>
    </cofactor>
    <text evidence="1">Binds 1 [4Fe-4S] cluster. The cluster is coordinated with 3 cysteines and an exchangeable S-adenosyl-L-methionine.</text>
</comment>
<comment type="subcellular location">
    <subcellularLocation>
        <location evidence="1">Cytoplasm</location>
    </subcellularLocation>
</comment>
<comment type="similarity">
    <text evidence="4">Belongs to the organic radical-activating enzymes family.</text>
</comment>
<gene>
    <name type="primary">pflA</name>
    <name type="ordered locus">SE_0215</name>
</gene>
<organism>
    <name type="scientific">Staphylococcus epidermidis (strain ATCC 12228 / FDA PCI 1200)</name>
    <dbReference type="NCBI Taxonomy" id="176280"/>
    <lineage>
        <taxon>Bacteria</taxon>
        <taxon>Bacillati</taxon>
        <taxon>Bacillota</taxon>
        <taxon>Bacilli</taxon>
        <taxon>Bacillales</taxon>
        <taxon>Staphylococcaceae</taxon>
        <taxon>Staphylococcus</taxon>
    </lineage>
</organism>
<feature type="chain" id="PRO_0000271718" description="Pyruvate formate-lyase-activating enzyme">
    <location>
        <begin position="1"/>
        <end position="251"/>
    </location>
</feature>
<feature type="domain" description="Radical SAM core" evidence="3">
    <location>
        <begin position="15"/>
        <end position="244"/>
    </location>
</feature>
<feature type="binding site" evidence="2">
    <location>
        <position position="29"/>
    </location>
    <ligand>
        <name>[4Fe-4S] cluster</name>
        <dbReference type="ChEBI" id="CHEBI:49883"/>
        <note>4Fe-4S-S-AdoMet</note>
    </ligand>
</feature>
<feature type="binding site" evidence="2">
    <location>
        <position position="33"/>
    </location>
    <ligand>
        <name>[4Fe-4S] cluster</name>
        <dbReference type="ChEBI" id="CHEBI:49883"/>
        <note>4Fe-4S-S-AdoMet</note>
    </ligand>
</feature>
<feature type="binding site" evidence="2">
    <location>
        <begin position="35"/>
        <end position="37"/>
    </location>
    <ligand>
        <name>S-adenosyl-L-methionine</name>
        <dbReference type="ChEBI" id="CHEBI:59789"/>
    </ligand>
</feature>
<feature type="binding site" evidence="2">
    <location>
        <position position="36"/>
    </location>
    <ligand>
        <name>[4Fe-4S] cluster</name>
        <dbReference type="ChEBI" id="CHEBI:49883"/>
        <note>4Fe-4S-S-AdoMet</note>
    </ligand>
</feature>
<feature type="binding site" evidence="2">
    <location>
        <position position="79"/>
    </location>
    <ligand>
        <name>S-adenosyl-L-methionine</name>
        <dbReference type="ChEBI" id="CHEBI:59789"/>
    </ligand>
</feature>
<feature type="binding site" evidence="2">
    <location>
        <begin position="134"/>
        <end position="136"/>
    </location>
    <ligand>
        <name>S-adenosyl-L-methionine</name>
        <dbReference type="ChEBI" id="CHEBI:59789"/>
    </ligand>
</feature>
<feature type="binding site" evidence="2">
    <location>
        <position position="207"/>
    </location>
    <ligand>
        <name>S-adenosyl-L-methionine</name>
        <dbReference type="ChEBI" id="CHEBI:59789"/>
    </ligand>
</feature>
<protein>
    <recommendedName>
        <fullName>Pyruvate formate-lyase-activating enzyme</fullName>
        <shortName>PFL-activating enzyme</shortName>
        <ecNumber>1.97.1.4</ecNumber>
    </recommendedName>
</protein>
<accession>Q8CTX5</accession>
<keyword id="KW-0004">4Fe-4S</keyword>
<keyword id="KW-0119">Carbohydrate metabolism</keyword>
<keyword id="KW-0963">Cytoplasm</keyword>
<keyword id="KW-0313">Glucose metabolism</keyword>
<keyword id="KW-0408">Iron</keyword>
<keyword id="KW-0411">Iron-sulfur</keyword>
<keyword id="KW-0479">Metal-binding</keyword>
<keyword id="KW-0560">Oxidoreductase</keyword>
<keyword id="KW-0949">S-adenosyl-L-methionine</keyword>
<dbReference type="EC" id="1.97.1.4"/>
<dbReference type="EMBL" id="AE015929">
    <property type="protein sequence ID" value="AAO03812.1"/>
    <property type="molecule type" value="Genomic_DNA"/>
</dbReference>
<dbReference type="RefSeq" id="NP_763770.1">
    <property type="nucleotide sequence ID" value="NC_004461.1"/>
</dbReference>
<dbReference type="RefSeq" id="WP_002446860.1">
    <property type="nucleotide sequence ID" value="NZ_WBME01000011.1"/>
</dbReference>
<dbReference type="SMR" id="Q8CTX5"/>
<dbReference type="KEGG" id="sep:SE_0215"/>
<dbReference type="PATRIC" id="fig|176280.10.peg.194"/>
<dbReference type="eggNOG" id="COG1180">
    <property type="taxonomic scope" value="Bacteria"/>
</dbReference>
<dbReference type="HOGENOM" id="CLU_058969_1_1_9"/>
<dbReference type="OrthoDB" id="9782387at2"/>
<dbReference type="Proteomes" id="UP000001411">
    <property type="component" value="Chromosome"/>
</dbReference>
<dbReference type="GO" id="GO:0005737">
    <property type="term" value="C:cytoplasm"/>
    <property type="evidence" value="ECO:0007669"/>
    <property type="project" value="UniProtKB-SubCell"/>
</dbReference>
<dbReference type="GO" id="GO:0051539">
    <property type="term" value="F:4 iron, 4 sulfur cluster binding"/>
    <property type="evidence" value="ECO:0007669"/>
    <property type="project" value="UniProtKB-KW"/>
</dbReference>
<dbReference type="GO" id="GO:0043365">
    <property type="term" value="F:[formate-C-acetyltransferase]-activating enzyme activity"/>
    <property type="evidence" value="ECO:0007669"/>
    <property type="project" value="UniProtKB-EC"/>
</dbReference>
<dbReference type="GO" id="GO:0046872">
    <property type="term" value="F:metal ion binding"/>
    <property type="evidence" value="ECO:0007669"/>
    <property type="project" value="UniProtKB-KW"/>
</dbReference>
<dbReference type="GO" id="GO:0006006">
    <property type="term" value="P:glucose metabolic process"/>
    <property type="evidence" value="ECO:0007669"/>
    <property type="project" value="UniProtKB-KW"/>
</dbReference>
<dbReference type="CDD" id="cd01335">
    <property type="entry name" value="Radical_SAM"/>
    <property type="match status" value="1"/>
</dbReference>
<dbReference type="Gene3D" id="3.20.20.70">
    <property type="entry name" value="Aldolase class I"/>
    <property type="match status" value="1"/>
</dbReference>
<dbReference type="InterPro" id="IPR013785">
    <property type="entry name" value="Aldolase_TIM"/>
</dbReference>
<dbReference type="InterPro" id="IPR034457">
    <property type="entry name" value="Organic_radical-activating"/>
</dbReference>
<dbReference type="InterPro" id="IPR012839">
    <property type="entry name" value="Organic_radical_activase"/>
</dbReference>
<dbReference type="InterPro" id="IPR012838">
    <property type="entry name" value="PFL1_activating"/>
</dbReference>
<dbReference type="InterPro" id="IPR034465">
    <property type="entry name" value="Pyruvate_for-lyase_activase"/>
</dbReference>
<dbReference type="InterPro" id="IPR001989">
    <property type="entry name" value="Radical_activat_CS"/>
</dbReference>
<dbReference type="InterPro" id="IPR007197">
    <property type="entry name" value="rSAM"/>
</dbReference>
<dbReference type="NCBIfam" id="TIGR02493">
    <property type="entry name" value="PFLA"/>
    <property type="match status" value="1"/>
</dbReference>
<dbReference type="PANTHER" id="PTHR30352:SF5">
    <property type="entry name" value="PYRUVATE FORMATE-LYASE 1-ACTIVATING ENZYME"/>
    <property type="match status" value="1"/>
</dbReference>
<dbReference type="PANTHER" id="PTHR30352">
    <property type="entry name" value="PYRUVATE FORMATE-LYASE-ACTIVATING ENZYME"/>
    <property type="match status" value="1"/>
</dbReference>
<dbReference type="Pfam" id="PF13353">
    <property type="entry name" value="Fer4_12"/>
    <property type="match status" value="1"/>
</dbReference>
<dbReference type="Pfam" id="PF04055">
    <property type="entry name" value="Radical_SAM"/>
    <property type="match status" value="1"/>
</dbReference>
<dbReference type="PIRSF" id="PIRSF000371">
    <property type="entry name" value="PFL_act_enz"/>
    <property type="match status" value="1"/>
</dbReference>
<dbReference type="SFLD" id="SFLDF00278">
    <property type="entry name" value="pyruvate_formate-lyase_activas"/>
    <property type="match status" value="1"/>
</dbReference>
<dbReference type="SFLD" id="SFLDS00029">
    <property type="entry name" value="Radical_SAM"/>
    <property type="match status" value="1"/>
</dbReference>
<dbReference type="SUPFAM" id="SSF102114">
    <property type="entry name" value="Radical SAM enzymes"/>
    <property type="match status" value="1"/>
</dbReference>
<dbReference type="PROSITE" id="PS01087">
    <property type="entry name" value="RADICAL_ACTIVATING"/>
    <property type="match status" value="1"/>
</dbReference>
<dbReference type="PROSITE" id="PS51918">
    <property type="entry name" value="RADICAL_SAM"/>
    <property type="match status" value="1"/>
</dbReference>
<name>PFLA_STAES</name>
<proteinExistence type="inferred from homology"/>